<dbReference type="EC" id="1.17.7.4" evidence="1"/>
<dbReference type="EMBL" id="AL049491">
    <property type="protein sequence ID" value="CAB39812.1"/>
    <property type="status" value="ALT_INIT"/>
    <property type="molecule type" value="Genomic_DNA"/>
</dbReference>
<dbReference type="EMBL" id="AL583923">
    <property type="protein sequence ID" value="CAC30893.1"/>
    <property type="status" value="ALT_INIT"/>
    <property type="molecule type" value="Genomic_DNA"/>
</dbReference>
<dbReference type="PIR" id="E87151">
    <property type="entry name" value="E87151"/>
</dbReference>
<dbReference type="RefSeq" id="WP_041323070.1">
    <property type="nucleotide sequence ID" value="NC_002677.1"/>
</dbReference>
<dbReference type="SMR" id="Q9X781"/>
<dbReference type="STRING" id="272631.gene:17575790"/>
<dbReference type="KEGG" id="mle:ML1938"/>
<dbReference type="Leproma" id="ML1938"/>
<dbReference type="eggNOG" id="COG0761">
    <property type="taxonomic scope" value="Bacteria"/>
</dbReference>
<dbReference type="HOGENOM" id="CLU_027486_1_0_11"/>
<dbReference type="UniPathway" id="UPA00056">
    <property type="reaction ID" value="UER00097"/>
</dbReference>
<dbReference type="UniPathway" id="UPA00059">
    <property type="reaction ID" value="UER00105"/>
</dbReference>
<dbReference type="Proteomes" id="UP000000806">
    <property type="component" value="Chromosome"/>
</dbReference>
<dbReference type="GO" id="GO:0051539">
    <property type="term" value="F:4 iron, 4 sulfur cluster binding"/>
    <property type="evidence" value="ECO:0007669"/>
    <property type="project" value="UniProtKB-UniRule"/>
</dbReference>
<dbReference type="GO" id="GO:0051745">
    <property type="term" value="F:4-hydroxy-3-methylbut-2-enyl diphosphate reductase activity"/>
    <property type="evidence" value="ECO:0007669"/>
    <property type="project" value="UniProtKB-UniRule"/>
</dbReference>
<dbReference type="GO" id="GO:0046872">
    <property type="term" value="F:metal ion binding"/>
    <property type="evidence" value="ECO:0007669"/>
    <property type="project" value="UniProtKB-KW"/>
</dbReference>
<dbReference type="GO" id="GO:0050992">
    <property type="term" value="P:dimethylallyl diphosphate biosynthetic process"/>
    <property type="evidence" value="ECO:0007669"/>
    <property type="project" value="UniProtKB-UniRule"/>
</dbReference>
<dbReference type="GO" id="GO:0019288">
    <property type="term" value="P:isopentenyl diphosphate biosynthetic process, methylerythritol 4-phosphate pathway"/>
    <property type="evidence" value="ECO:0007669"/>
    <property type="project" value="UniProtKB-UniRule"/>
</dbReference>
<dbReference type="GO" id="GO:0016114">
    <property type="term" value="P:terpenoid biosynthetic process"/>
    <property type="evidence" value="ECO:0007669"/>
    <property type="project" value="UniProtKB-UniRule"/>
</dbReference>
<dbReference type="CDD" id="cd13944">
    <property type="entry name" value="lytB_ispH"/>
    <property type="match status" value="1"/>
</dbReference>
<dbReference type="Gene3D" id="3.40.50.11270">
    <property type="match status" value="1"/>
</dbReference>
<dbReference type="Gene3D" id="3.40.1010.20">
    <property type="entry name" value="4-hydroxy-3-methylbut-2-enyl diphosphate reductase, catalytic domain"/>
    <property type="match status" value="2"/>
</dbReference>
<dbReference type="HAMAP" id="MF_00191">
    <property type="entry name" value="IspH"/>
    <property type="match status" value="1"/>
</dbReference>
<dbReference type="InterPro" id="IPR003451">
    <property type="entry name" value="LytB/IspH"/>
</dbReference>
<dbReference type="NCBIfam" id="TIGR00216">
    <property type="entry name" value="ispH_lytB"/>
    <property type="match status" value="1"/>
</dbReference>
<dbReference type="NCBIfam" id="NF002189">
    <property type="entry name" value="PRK01045.1-3"/>
    <property type="match status" value="1"/>
</dbReference>
<dbReference type="NCBIfam" id="NF002190">
    <property type="entry name" value="PRK01045.1-4"/>
    <property type="match status" value="1"/>
</dbReference>
<dbReference type="PANTHER" id="PTHR30426">
    <property type="entry name" value="4-HYDROXY-3-METHYLBUT-2-ENYL DIPHOSPHATE REDUCTASE"/>
    <property type="match status" value="1"/>
</dbReference>
<dbReference type="PANTHER" id="PTHR30426:SF0">
    <property type="entry name" value="4-HYDROXY-3-METHYLBUT-2-ENYL DIPHOSPHATE REDUCTASE"/>
    <property type="match status" value="1"/>
</dbReference>
<dbReference type="Pfam" id="PF02401">
    <property type="entry name" value="LYTB"/>
    <property type="match status" value="1"/>
</dbReference>
<reference key="1">
    <citation type="journal article" date="2001" name="Nature">
        <title>Massive gene decay in the leprosy bacillus.</title>
        <authorList>
            <person name="Cole S.T."/>
            <person name="Eiglmeier K."/>
            <person name="Parkhill J."/>
            <person name="James K.D."/>
            <person name="Thomson N.R."/>
            <person name="Wheeler P.R."/>
            <person name="Honore N."/>
            <person name="Garnier T."/>
            <person name="Churcher C.M."/>
            <person name="Harris D.E."/>
            <person name="Mungall K.L."/>
            <person name="Basham D."/>
            <person name="Brown D."/>
            <person name="Chillingworth T."/>
            <person name="Connor R."/>
            <person name="Davies R.M."/>
            <person name="Devlin K."/>
            <person name="Duthoy S."/>
            <person name="Feltwell T."/>
            <person name="Fraser A."/>
            <person name="Hamlin N."/>
            <person name="Holroyd S."/>
            <person name="Hornsby T."/>
            <person name="Jagels K."/>
            <person name="Lacroix C."/>
            <person name="Maclean J."/>
            <person name="Moule S."/>
            <person name="Murphy L.D."/>
            <person name="Oliver K."/>
            <person name="Quail M.A."/>
            <person name="Rajandream M.A."/>
            <person name="Rutherford K.M."/>
            <person name="Rutter S."/>
            <person name="Seeger K."/>
            <person name="Simon S."/>
            <person name="Simmonds M."/>
            <person name="Skelton J."/>
            <person name="Squares R."/>
            <person name="Squares S."/>
            <person name="Stevens K."/>
            <person name="Taylor K."/>
            <person name="Whitehead S."/>
            <person name="Woodward J.R."/>
            <person name="Barrell B.G."/>
        </authorList>
    </citation>
    <scope>NUCLEOTIDE SEQUENCE [LARGE SCALE GENOMIC DNA]</scope>
    <source>
        <strain>TN</strain>
    </source>
</reference>
<accession>Q9X781</accession>
<comment type="function">
    <text evidence="1">Catalyzes the conversion of 1-hydroxy-2-methyl-2-(E)-butenyl 4-diphosphate (HMBPP) into a mixture of isopentenyl diphosphate (IPP) and dimethylallyl diphosphate (DMAPP). Acts in the terminal step of the DOXP/MEP pathway for isoprenoid precursor biosynthesis.</text>
</comment>
<comment type="catalytic activity">
    <reaction evidence="1">
        <text>isopentenyl diphosphate + 2 oxidized [2Fe-2S]-[ferredoxin] + H2O = (2E)-4-hydroxy-3-methylbut-2-enyl diphosphate + 2 reduced [2Fe-2S]-[ferredoxin] + 2 H(+)</text>
        <dbReference type="Rhea" id="RHEA:24488"/>
        <dbReference type="Rhea" id="RHEA-COMP:10000"/>
        <dbReference type="Rhea" id="RHEA-COMP:10001"/>
        <dbReference type="ChEBI" id="CHEBI:15377"/>
        <dbReference type="ChEBI" id="CHEBI:15378"/>
        <dbReference type="ChEBI" id="CHEBI:33737"/>
        <dbReference type="ChEBI" id="CHEBI:33738"/>
        <dbReference type="ChEBI" id="CHEBI:128753"/>
        <dbReference type="ChEBI" id="CHEBI:128769"/>
        <dbReference type="EC" id="1.17.7.4"/>
    </reaction>
</comment>
<comment type="catalytic activity">
    <reaction evidence="1">
        <text>dimethylallyl diphosphate + 2 oxidized [2Fe-2S]-[ferredoxin] + H2O = (2E)-4-hydroxy-3-methylbut-2-enyl diphosphate + 2 reduced [2Fe-2S]-[ferredoxin] + 2 H(+)</text>
        <dbReference type="Rhea" id="RHEA:24825"/>
        <dbReference type="Rhea" id="RHEA-COMP:10000"/>
        <dbReference type="Rhea" id="RHEA-COMP:10001"/>
        <dbReference type="ChEBI" id="CHEBI:15377"/>
        <dbReference type="ChEBI" id="CHEBI:15378"/>
        <dbReference type="ChEBI" id="CHEBI:33737"/>
        <dbReference type="ChEBI" id="CHEBI:33738"/>
        <dbReference type="ChEBI" id="CHEBI:57623"/>
        <dbReference type="ChEBI" id="CHEBI:128753"/>
        <dbReference type="EC" id="1.17.7.4"/>
    </reaction>
</comment>
<comment type="cofactor">
    <cofactor evidence="1">
        <name>[4Fe-4S] cluster</name>
        <dbReference type="ChEBI" id="CHEBI:49883"/>
    </cofactor>
    <text evidence="1">Binds 1 [4Fe-4S] cluster per subunit.</text>
</comment>
<comment type="pathway">
    <text evidence="1">Isoprenoid biosynthesis; dimethylallyl diphosphate biosynthesis; dimethylallyl diphosphate from (2E)-4-hydroxy-3-methylbutenyl diphosphate: step 1/1.</text>
</comment>
<comment type="pathway">
    <text evidence="1">Isoprenoid biosynthesis; isopentenyl diphosphate biosynthesis via DXP pathway; isopentenyl diphosphate from 1-deoxy-D-xylulose 5-phosphate: step 6/6.</text>
</comment>
<comment type="similarity">
    <text evidence="1">Belongs to the IspH family.</text>
</comment>
<comment type="sequence caution" evidence="2">
    <conflict type="erroneous initiation">
        <sequence resource="EMBL-CDS" id="CAB39812"/>
    </conflict>
</comment>
<comment type="sequence caution" evidence="2">
    <conflict type="erroneous initiation">
        <sequence resource="EMBL-CDS" id="CAC30893"/>
    </conflict>
</comment>
<organism>
    <name type="scientific">Mycobacterium leprae (strain TN)</name>
    <dbReference type="NCBI Taxonomy" id="272631"/>
    <lineage>
        <taxon>Bacteria</taxon>
        <taxon>Bacillati</taxon>
        <taxon>Actinomycetota</taxon>
        <taxon>Actinomycetes</taxon>
        <taxon>Mycobacteriales</taxon>
        <taxon>Mycobacteriaceae</taxon>
        <taxon>Mycobacterium</taxon>
    </lineage>
</organism>
<evidence type="ECO:0000255" key="1">
    <source>
        <dbReference type="HAMAP-Rule" id="MF_00191"/>
    </source>
</evidence>
<evidence type="ECO:0000305" key="2"/>
<name>ISPH_MYCLE</name>
<protein>
    <recommendedName>
        <fullName evidence="1">4-hydroxy-3-methylbut-2-enyl diphosphate reductase</fullName>
        <shortName evidence="1">HMBPP reductase</shortName>
        <ecNumber evidence="1">1.17.7.4</ecNumber>
    </recommendedName>
</protein>
<proteinExistence type="inferred from homology"/>
<gene>
    <name evidence="1" type="primary">ispH</name>
    <name type="synonym">lytB</name>
    <name type="synonym">lytB2</name>
    <name type="ordered locus">ML1938</name>
    <name type="ORF">MLCB1222.06c</name>
</gene>
<feature type="chain" id="PRO_0000128838" description="4-hydroxy-3-methylbut-2-enyl diphosphate reductase">
    <location>
        <begin position="1"/>
        <end position="332"/>
    </location>
</feature>
<feature type="active site" description="Proton donor" evidence="1">
    <location>
        <position position="148"/>
    </location>
</feature>
<feature type="binding site" evidence="1">
    <location>
        <position position="34"/>
    </location>
    <ligand>
        <name>[4Fe-4S] cluster</name>
        <dbReference type="ChEBI" id="CHEBI:49883"/>
    </ligand>
</feature>
<feature type="binding site" evidence="1">
    <location>
        <position position="63"/>
    </location>
    <ligand>
        <name>(2E)-4-hydroxy-3-methylbut-2-enyl diphosphate</name>
        <dbReference type="ChEBI" id="CHEBI:128753"/>
    </ligand>
</feature>
<feature type="binding site" evidence="1">
    <location>
        <position position="63"/>
    </location>
    <ligand>
        <name>dimethylallyl diphosphate</name>
        <dbReference type="ChEBI" id="CHEBI:57623"/>
    </ligand>
</feature>
<feature type="binding site" evidence="1">
    <location>
        <position position="63"/>
    </location>
    <ligand>
        <name>isopentenyl diphosphate</name>
        <dbReference type="ChEBI" id="CHEBI:128769"/>
    </ligand>
</feature>
<feature type="binding site" evidence="1">
    <location>
        <position position="96"/>
    </location>
    <ligand>
        <name>(2E)-4-hydroxy-3-methylbut-2-enyl diphosphate</name>
        <dbReference type="ChEBI" id="CHEBI:128753"/>
    </ligand>
</feature>
<feature type="binding site" evidence="1">
    <location>
        <position position="96"/>
    </location>
    <ligand>
        <name>dimethylallyl diphosphate</name>
        <dbReference type="ChEBI" id="CHEBI:57623"/>
    </ligand>
</feature>
<feature type="binding site" evidence="1">
    <location>
        <position position="96"/>
    </location>
    <ligand>
        <name>isopentenyl diphosphate</name>
        <dbReference type="ChEBI" id="CHEBI:128769"/>
    </ligand>
</feature>
<feature type="binding site" evidence="1">
    <location>
        <position position="118"/>
    </location>
    <ligand>
        <name>[4Fe-4S] cluster</name>
        <dbReference type="ChEBI" id="CHEBI:49883"/>
    </ligand>
</feature>
<feature type="binding site" evidence="1">
    <location>
        <position position="146"/>
    </location>
    <ligand>
        <name>(2E)-4-hydroxy-3-methylbut-2-enyl diphosphate</name>
        <dbReference type="ChEBI" id="CHEBI:128753"/>
    </ligand>
</feature>
<feature type="binding site" evidence="1">
    <location>
        <position position="146"/>
    </location>
    <ligand>
        <name>dimethylallyl diphosphate</name>
        <dbReference type="ChEBI" id="CHEBI:57623"/>
    </ligand>
</feature>
<feature type="binding site" evidence="1">
    <location>
        <position position="146"/>
    </location>
    <ligand>
        <name>isopentenyl diphosphate</name>
        <dbReference type="ChEBI" id="CHEBI:128769"/>
    </ligand>
</feature>
<feature type="binding site" evidence="1">
    <location>
        <position position="186"/>
    </location>
    <ligand>
        <name>(2E)-4-hydroxy-3-methylbut-2-enyl diphosphate</name>
        <dbReference type="ChEBI" id="CHEBI:128753"/>
    </ligand>
</feature>
<feature type="binding site" evidence="1">
    <location>
        <position position="216"/>
    </location>
    <ligand>
        <name>[4Fe-4S] cluster</name>
        <dbReference type="ChEBI" id="CHEBI:49883"/>
    </ligand>
</feature>
<feature type="binding site" evidence="1">
    <location>
        <position position="244"/>
    </location>
    <ligand>
        <name>(2E)-4-hydroxy-3-methylbut-2-enyl diphosphate</name>
        <dbReference type="ChEBI" id="CHEBI:128753"/>
    </ligand>
</feature>
<feature type="binding site" evidence="1">
    <location>
        <position position="244"/>
    </location>
    <ligand>
        <name>dimethylallyl diphosphate</name>
        <dbReference type="ChEBI" id="CHEBI:57623"/>
    </ligand>
</feature>
<feature type="binding site" evidence="1">
    <location>
        <position position="244"/>
    </location>
    <ligand>
        <name>isopentenyl diphosphate</name>
        <dbReference type="ChEBI" id="CHEBI:128769"/>
    </ligand>
</feature>
<feature type="binding site" evidence="1">
    <location>
        <position position="245"/>
    </location>
    <ligand>
        <name>(2E)-4-hydroxy-3-methylbut-2-enyl diphosphate</name>
        <dbReference type="ChEBI" id="CHEBI:128753"/>
    </ligand>
</feature>
<feature type="binding site" evidence="1">
    <location>
        <position position="245"/>
    </location>
    <ligand>
        <name>dimethylallyl diphosphate</name>
        <dbReference type="ChEBI" id="CHEBI:57623"/>
    </ligand>
</feature>
<feature type="binding site" evidence="1">
    <location>
        <position position="245"/>
    </location>
    <ligand>
        <name>isopentenyl diphosphate</name>
        <dbReference type="ChEBI" id="CHEBI:128769"/>
    </ligand>
</feature>
<feature type="binding site" evidence="1">
    <location>
        <position position="246"/>
    </location>
    <ligand>
        <name>(2E)-4-hydroxy-3-methylbut-2-enyl diphosphate</name>
        <dbReference type="ChEBI" id="CHEBI:128753"/>
    </ligand>
</feature>
<feature type="binding site" evidence="1">
    <location>
        <position position="246"/>
    </location>
    <ligand>
        <name>dimethylallyl diphosphate</name>
        <dbReference type="ChEBI" id="CHEBI:57623"/>
    </ligand>
</feature>
<feature type="binding site" evidence="1">
    <location>
        <position position="246"/>
    </location>
    <ligand>
        <name>isopentenyl diphosphate</name>
        <dbReference type="ChEBI" id="CHEBI:128769"/>
    </ligand>
</feature>
<feature type="binding site" evidence="1">
    <location>
        <position position="289"/>
    </location>
    <ligand>
        <name>(2E)-4-hydroxy-3-methylbut-2-enyl diphosphate</name>
        <dbReference type="ChEBI" id="CHEBI:128753"/>
    </ligand>
</feature>
<feature type="binding site" evidence="1">
    <location>
        <position position="289"/>
    </location>
    <ligand>
        <name>dimethylallyl diphosphate</name>
        <dbReference type="ChEBI" id="CHEBI:57623"/>
    </ligand>
</feature>
<feature type="binding site" evidence="1">
    <location>
        <position position="289"/>
    </location>
    <ligand>
        <name>isopentenyl diphosphate</name>
        <dbReference type="ChEBI" id="CHEBI:128769"/>
    </ligand>
</feature>
<sequence>MPPTVNMGIPGASRSIVENLKRKRVLLAEPRGYCAGVDRAVETVERSLRKYGPPVYVRHEIVHNRHVVETLERAGAVFVEETDYVPEGAIVIFSAHGVAPTVYAAAAERNLRTIDATCPLVTKVHNEVKRFARNDYDILLIGHEGHEEVIATAGEAPTHVQLVDGLAAVQQVVVRDENKVVWLSQTTLSVDETMRIVERLRQRFPKLQDPPSDDICYATQNRQVAVKAMAPECELVIVVGSRNSSNSVRLVEVAMGSGAGAAYLVDWAKDIDPAWLAGVTTVGVTSGASVPDILVQGVLKWLAERGYDVVQSVTTANEALVFALPREIRSAH</sequence>
<keyword id="KW-0004">4Fe-4S</keyword>
<keyword id="KW-0408">Iron</keyword>
<keyword id="KW-0411">Iron-sulfur</keyword>
<keyword id="KW-0414">Isoprene biosynthesis</keyword>
<keyword id="KW-0479">Metal-binding</keyword>
<keyword id="KW-0560">Oxidoreductase</keyword>
<keyword id="KW-1185">Reference proteome</keyword>